<proteinExistence type="inferred from homology"/>
<gene>
    <name type="primary">cmtG</name>
    <name type="ordered locus">ROP_34160</name>
</gene>
<name>HOA1_RHOOB</name>
<reference key="1">
    <citation type="submission" date="2009-03" db="EMBL/GenBank/DDBJ databases">
        <title>Comparison of the complete genome sequences of Rhodococcus erythropolis PR4 and Rhodococcus opacus B4.</title>
        <authorList>
            <person name="Takarada H."/>
            <person name="Sekine M."/>
            <person name="Hosoyama A."/>
            <person name="Yamada R."/>
            <person name="Fujisawa T."/>
            <person name="Omata S."/>
            <person name="Shimizu A."/>
            <person name="Tsukatani N."/>
            <person name="Tanikawa S."/>
            <person name="Fujita N."/>
            <person name="Harayama S."/>
        </authorList>
    </citation>
    <scope>NUCLEOTIDE SEQUENCE [LARGE SCALE GENOMIC DNA]</scope>
    <source>
        <strain>B4</strain>
    </source>
</reference>
<comment type="catalytic activity">
    <reaction evidence="1">
        <text>(S)-4-hydroxy-2-oxopentanoate = acetaldehyde + pyruvate</text>
        <dbReference type="Rhea" id="RHEA:22624"/>
        <dbReference type="ChEBI" id="CHEBI:15343"/>
        <dbReference type="ChEBI" id="CHEBI:15361"/>
        <dbReference type="ChEBI" id="CHEBI:73143"/>
        <dbReference type="EC" id="4.1.3.39"/>
    </reaction>
</comment>
<comment type="similarity">
    <text evidence="1">Belongs to the 4-hydroxy-2-oxovalerate aldolase family.</text>
</comment>
<organism>
    <name type="scientific">Rhodococcus opacus (strain B4)</name>
    <dbReference type="NCBI Taxonomy" id="632772"/>
    <lineage>
        <taxon>Bacteria</taxon>
        <taxon>Bacillati</taxon>
        <taxon>Actinomycetota</taxon>
        <taxon>Actinomycetes</taxon>
        <taxon>Mycobacteriales</taxon>
        <taxon>Nocardiaceae</taxon>
        <taxon>Rhodococcus</taxon>
    </lineage>
</organism>
<sequence>MTKLYIQDVTLRDGMHAVRHRITPDDVGTIVAALDAAGVDAIEVAHGDGLAGGSLNYGPGSNTDWEWIEAAADNLTHATLTTLLLPGIGTIAELEQAHKLGVRSIRIATHCTEADVSAQHIAKARELGMDVSGFLMMSHMTPAENLAEQAKLMESYGAHCVYVTDSGGRLTMNGVRDRVRAYRDILDPGTQIGIHAHENLSLSVANSVVAVEEGVTRVDASLAGHGAGAGNCPIEAFIAVANLHDWQHGSDLFALQDAADDLVRPLQDRPVRVDRETLTLGYAGVYSSFLRHAETASKNYGIDVRTILQEVGKRGLVGGQEDMITDIALDLVASGPVSTY</sequence>
<protein>
    <recommendedName>
        <fullName evidence="1">4-hydroxy-2-oxovalerate aldolase 1</fullName>
        <shortName evidence="1">HOA 1</shortName>
        <ecNumber evidence="1">4.1.3.39</ecNumber>
    </recommendedName>
    <alternativeName>
        <fullName evidence="1">4-hydroxy-2-keto-pentanoic acid aldolase 1</fullName>
    </alternativeName>
    <alternativeName>
        <fullName evidence="1">4-hydroxy-2-oxopentanoate aldolase 1</fullName>
    </alternativeName>
</protein>
<feature type="chain" id="PRO_0000387897" description="4-hydroxy-2-oxovalerate aldolase 1">
    <location>
        <begin position="1"/>
        <end position="340"/>
    </location>
</feature>
<feature type="domain" description="Pyruvate carboxyltransferase" evidence="1">
    <location>
        <begin position="4"/>
        <end position="256"/>
    </location>
</feature>
<feature type="active site" description="Proton acceptor" evidence="1">
    <location>
        <position position="16"/>
    </location>
</feature>
<feature type="binding site" evidence="1">
    <location>
        <begin position="12"/>
        <end position="13"/>
    </location>
    <ligand>
        <name>substrate</name>
    </ligand>
</feature>
<feature type="binding site" evidence="1">
    <location>
        <position position="13"/>
    </location>
    <ligand>
        <name>Mn(2+)</name>
        <dbReference type="ChEBI" id="CHEBI:29035"/>
    </ligand>
</feature>
<feature type="binding site" evidence="1">
    <location>
        <position position="166"/>
    </location>
    <ligand>
        <name>substrate</name>
    </ligand>
</feature>
<feature type="binding site" evidence="1">
    <location>
        <position position="195"/>
    </location>
    <ligand>
        <name>Mn(2+)</name>
        <dbReference type="ChEBI" id="CHEBI:29035"/>
    </ligand>
</feature>
<feature type="binding site" evidence="1">
    <location>
        <position position="195"/>
    </location>
    <ligand>
        <name>substrate</name>
    </ligand>
</feature>
<feature type="binding site" evidence="1">
    <location>
        <position position="197"/>
    </location>
    <ligand>
        <name>Mn(2+)</name>
        <dbReference type="ChEBI" id="CHEBI:29035"/>
    </ligand>
</feature>
<feature type="binding site" evidence="1">
    <location>
        <position position="286"/>
    </location>
    <ligand>
        <name>substrate</name>
    </ligand>
</feature>
<feature type="site" description="Transition state stabilizer" evidence="1">
    <location>
        <position position="12"/>
    </location>
</feature>
<dbReference type="EC" id="4.1.3.39" evidence="1"/>
<dbReference type="EMBL" id="AP011115">
    <property type="protein sequence ID" value="BAH51663.1"/>
    <property type="molecule type" value="Genomic_DNA"/>
</dbReference>
<dbReference type="RefSeq" id="WP_012690613.1">
    <property type="nucleotide sequence ID" value="NC_012522.1"/>
</dbReference>
<dbReference type="SMR" id="C1B7L0"/>
<dbReference type="STRING" id="632772.ROP_34160"/>
<dbReference type="KEGG" id="rop:ROP_34160"/>
<dbReference type="PATRIC" id="fig|632772.20.peg.3580"/>
<dbReference type="HOGENOM" id="CLU_049173_0_0_11"/>
<dbReference type="OrthoDB" id="9803573at2"/>
<dbReference type="Proteomes" id="UP000002212">
    <property type="component" value="Chromosome"/>
</dbReference>
<dbReference type="GO" id="GO:0003852">
    <property type="term" value="F:2-isopropylmalate synthase activity"/>
    <property type="evidence" value="ECO:0007669"/>
    <property type="project" value="TreeGrafter"/>
</dbReference>
<dbReference type="GO" id="GO:0008701">
    <property type="term" value="F:4-hydroxy-2-oxovalerate aldolase activity"/>
    <property type="evidence" value="ECO:0007669"/>
    <property type="project" value="UniProtKB-UniRule"/>
</dbReference>
<dbReference type="GO" id="GO:0030145">
    <property type="term" value="F:manganese ion binding"/>
    <property type="evidence" value="ECO:0007669"/>
    <property type="project" value="UniProtKB-UniRule"/>
</dbReference>
<dbReference type="GO" id="GO:0009056">
    <property type="term" value="P:catabolic process"/>
    <property type="evidence" value="ECO:0007669"/>
    <property type="project" value="UniProtKB-KW"/>
</dbReference>
<dbReference type="GO" id="GO:0009098">
    <property type="term" value="P:L-leucine biosynthetic process"/>
    <property type="evidence" value="ECO:0007669"/>
    <property type="project" value="TreeGrafter"/>
</dbReference>
<dbReference type="CDD" id="cd07943">
    <property type="entry name" value="DRE_TIM_HOA"/>
    <property type="match status" value="1"/>
</dbReference>
<dbReference type="Gene3D" id="1.10.8.60">
    <property type="match status" value="1"/>
</dbReference>
<dbReference type="Gene3D" id="3.20.20.70">
    <property type="entry name" value="Aldolase class I"/>
    <property type="match status" value="1"/>
</dbReference>
<dbReference type="HAMAP" id="MF_01656">
    <property type="entry name" value="HOA"/>
    <property type="match status" value="1"/>
</dbReference>
<dbReference type="InterPro" id="IPR050073">
    <property type="entry name" value="2-IPM_HCS-like"/>
</dbReference>
<dbReference type="InterPro" id="IPR017629">
    <property type="entry name" value="4OH_2_O-val_aldolase"/>
</dbReference>
<dbReference type="InterPro" id="IPR013785">
    <property type="entry name" value="Aldolase_TIM"/>
</dbReference>
<dbReference type="InterPro" id="IPR012425">
    <property type="entry name" value="DmpG_comm"/>
</dbReference>
<dbReference type="InterPro" id="IPR035685">
    <property type="entry name" value="DRE_TIM_HOA"/>
</dbReference>
<dbReference type="InterPro" id="IPR000891">
    <property type="entry name" value="PYR_CT"/>
</dbReference>
<dbReference type="NCBIfam" id="TIGR03217">
    <property type="entry name" value="4OH_2_O_val_ald"/>
    <property type="match status" value="1"/>
</dbReference>
<dbReference type="NCBIfam" id="NF006049">
    <property type="entry name" value="PRK08195.1"/>
    <property type="match status" value="1"/>
</dbReference>
<dbReference type="PANTHER" id="PTHR10277:SF9">
    <property type="entry name" value="2-ISOPROPYLMALATE SYNTHASE 1, CHLOROPLASTIC-RELATED"/>
    <property type="match status" value="1"/>
</dbReference>
<dbReference type="PANTHER" id="PTHR10277">
    <property type="entry name" value="HOMOCITRATE SYNTHASE-RELATED"/>
    <property type="match status" value="1"/>
</dbReference>
<dbReference type="Pfam" id="PF07836">
    <property type="entry name" value="DmpG_comm"/>
    <property type="match status" value="1"/>
</dbReference>
<dbReference type="Pfam" id="PF00682">
    <property type="entry name" value="HMGL-like"/>
    <property type="match status" value="1"/>
</dbReference>
<dbReference type="SUPFAM" id="SSF51569">
    <property type="entry name" value="Aldolase"/>
    <property type="match status" value="1"/>
</dbReference>
<dbReference type="SUPFAM" id="SSF89000">
    <property type="entry name" value="post-HMGL domain-like"/>
    <property type="match status" value="1"/>
</dbReference>
<dbReference type="PROSITE" id="PS50991">
    <property type="entry name" value="PYR_CT"/>
    <property type="match status" value="1"/>
</dbReference>
<accession>C1B7L0</accession>
<evidence type="ECO:0000255" key="1">
    <source>
        <dbReference type="HAMAP-Rule" id="MF_01656"/>
    </source>
</evidence>
<keyword id="KW-0058">Aromatic hydrocarbons catabolism</keyword>
<keyword id="KW-0456">Lyase</keyword>
<keyword id="KW-0464">Manganese</keyword>
<keyword id="KW-0479">Metal-binding</keyword>